<comment type="function">
    <text evidence="1">Catalyzes the synthesis of the hydroxymethylpyrimidine phosphate (HMP-P) moiety of thiamine from aminoimidazole ribotide (AIR) in a radical S-adenosyl-L-methionine (SAM)-dependent reaction.</text>
</comment>
<comment type="catalytic activity">
    <reaction evidence="1">
        <text>5-amino-1-(5-phospho-beta-D-ribosyl)imidazole + S-adenosyl-L-methionine = 4-amino-2-methyl-5-(phosphooxymethyl)pyrimidine + CO + 5'-deoxyadenosine + formate + L-methionine + 3 H(+)</text>
        <dbReference type="Rhea" id="RHEA:24840"/>
        <dbReference type="ChEBI" id="CHEBI:15378"/>
        <dbReference type="ChEBI" id="CHEBI:15740"/>
        <dbReference type="ChEBI" id="CHEBI:17245"/>
        <dbReference type="ChEBI" id="CHEBI:17319"/>
        <dbReference type="ChEBI" id="CHEBI:57844"/>
        <dbReference type="ChEBI" id="CHEBI:58354"/>
        <dbReference type="ChEBI" id="CHEBI:59789"/>
        <dbReference type="ChEBI" id="CHEBI:137981"/>
        <dbReference type="EC" id="4.1.99.17"/>
    </reaction>
</comment>
<comment type="cofactor">
    <cofactor evidence="1">
        <name>[4Fe-4S] cluster</name>
        <dbReference type="ChEBI" id="CHEBI:49883"/>
    </cofactor>
    <text evidence="1">Binds 1 [4Fe-4S] cluster per subunit. The cluster is coordinated with 3 cysteines and an exchangeable S-adenosyl-L-methionine.</text>
</comment>
<comment type="pathway">
    <text evidence="1">Cofactor biosynthesis; thiamine diphosphate biosynthesis.</text>
</comment>
<comment type="subunit">
    <text evidence="1">Homodimer.</text>
</comment>
<comment type="similarity">
    <text evidence="1">Belongs to the ThiC family.</text>
</comment>
<evidence type="ECO:0000255" key="1">
    <source>
        <dbReference type="HAMAP-Rule" id="MF_00089"/>
    </source>
</evidence>
<evidence type="ECO:0000256" key="2">
    <source>
        <dbReference type="SAM" id="MobiDB-lite"/>
    </source>
</evidence>
<feature type="chain" id="PRO_0000152790" description="Phosphomethylpyrimidine synthase">
    <location>
        <begin position="1"/>
        <end position="632"/>
    </location>
</feature>
<feature type="region of interest" description="Disordered" evidence="2">
    <location>
        <begin position="1"/>
        <end position="26"/>
    </location>
</feature>
<feature type="compositionally biased region" description="Polar residues" evidence="2">
    <location>
        <begin position="1"/>
        <end position="23"/>
    </location>
</feature>
<feature type="binding site" evidence="1">
    <location>
        <position position="221"/>
    </location>
    <ligand>
        <name>substrate</name>
    </ligand>
</feature>
<feature type="binding site" evidence="1">
    <location>
        <position position="250"/>
    </location>
    <ligand>
        <name>substrate</name>
    </ligand>
</feature>
<feature type="binding site" evidence="1">
    <location>
        <position position="279"/>
    </location>
    <ligand>
        <name>substrate</name>
    </ligand>
</feature>
<feature type="binding site" evidence="1">
    <location>
        <position position="315"/>
    </location>
    <ligand>
        <name>substrate</name>
    </ligand>
</feature>
<feature type="binding site" evidence="1">
    <location>
        <begin position="335"/>
        <end position="337"/>
    </location>
    <ligand>
        <name>substrate</name>
    </ligand>
</feature>
<feature type="binding site" evidence="1">
    <location>
        <begin position="376"/>
        <end position="379"/>
    </location>
    <ligand>
        <name>substrate</name>
    </ligand>
</feature>
<feature type="binding site" evidence="1">
    <location>
        <position position="415"/>
    </location>
    <ligand>
        <name>substrate</name>
    </ligand>
</feature>
<feature type="binding site" evidence="1">
    <location>
        <position position="419"/>
    </location>
    <ligand>
        <name>Zn(2+)</name>
        <dbReference type="ChEBI" id="CHEBI:29105"/>
    </ligand>
</feature>
<feature type="binding site" evidence="1">
    <location>
        <position position="442"/>
    </location>
    <ligand>
        <name>substrate</name>
    </ligand>
</feature>
<feature type="binding site" evidence="1">
    <location>
        <position position="483"/>
    </location>
    <ligand>
        <name>Zn(2+)</name>
        <dbReference type="ChEBI" id="CHEBI:29105"/>
    </ligand>
</feature>
<feature type="binding site" evidence="1">
    <location>
        <position position="563"/>
    </location>
    <ligand>
        <name>[4Fe-4S] cluster</name>
        <dbReference type="ChEBI" id="CHEBI:49883"/>
        <note>4Fe-4S-S-AdoMet</note>
    </ligand>
</feature>
<feature type="binding site" evidence="1">
    <location>
        <position position="566"/>
    </location>
    <ligand>
        <name>[4Fe-4S] cluster</name>
        <dbReference type="ChEBI" id="CHEBI:49883"/>
        <note>4Fe-4S-S-AdoMet</note>
    </ligand>
</feature>
<feature type="binding site" evidence="1">
    <location>
        <position position="571"/>
    </location>
    <ligand>
        <name>[4Fe-4S] cluster</name>
        <dbReference type="ChEBI" id="CHEBI:49883"/>
        <note>4Fe-4S-S-AdoMet</note>
    </ligand>
</feature>
<proteinExistence type="inferred from homology"/>
<dbReference type="EC" id="4.1.99.17" evidence="1"/>
<dbReference type="EMBL" id="BA000040">
    <property type="protein sequence ID" value="BAC51924.1"/>
    <property type="molecule type" value="Genomic_DNA"/>
</dbReference>
<dbReference type="RefSeq" id="NP_773299.1">
    <property type="nucleotide sequence ID" value="NC_004463.1"/>
</dbReference>
<dbReference type="RefSeq" id="WP_011089399.1">
    <property type="nucleotide sequence ID" value="NC_004463.1"/>
</dbReference>
<dbReference type="SMR" id="Q89FP0"/>
<dbReference type="FunCoup" id="Q89FP0">
    <property type="interactions" value="585"/>
</dbReference>
<dbReference type="STRING" id="224911.AAV28_30870"/>
<dbReference type="EnsemblBacteria" id="BAC51924">
    <property type="protein sequence ID" value="BAC51924"/>
    <property type="gene ID" value="BAC51924"/>
</dbReference>
<dbReference type="GeneID" id="46493631"/>
<dbReference type="KEGG" id="bja:blr6659"/>
<dbReference type="PATRIC" id="fig|224911.44.peg.6671"/>
<dbReference type="eggNOG" id="COG0422">
    <property type="taxonomic scope" value="Bacteria"/>
</dbReference>
<dbReference type="HOGENOM" id="CLU_013181_2_1_5"/>
<dbReference type="InParanoid" id="Q89FP0"/>
<dbReference type="OrthoDB" id="9805897at2"/>
<dbReference type="PhylomeDB" id="Q89FP0"/>
<dbReference type="UniPathway" id="UPA00060"/>
<dbReference type="Proteomes" id="UP000002526">
    <property type="component" value="Chromosome"/>
</dbReference>
<dbReference type="GO" id="GO:0005829">
    <property type="term" value="C:cytosol"/>
    <property type="evidence" value="ECO:0000318"/>
    <property type="project" value="GO_Central"/>
</dbReference>
<dbReference type="GO" id="GO:0051539">
    <property type="term" value="F:4 iron, 4 sulfur cluster binding"/>
    <property type="evidence" value="ECO:0007669"/>
    <property type="project" value="UniProtKB-KW"/>
</dbReference>
<dbReference type="GO" id="GO:0016830">
    <property type="term" value="F:carbon-carbon lyase activity"/>
    <property type="evidence" value="ECO:0007669"/>
    <property type="project" value="InterPro"/>
</dbReference>
<dbReference type="GO" id="GO:0008270">
    <property type="term" value="F:zinc ion binding"/>
    <property type="evidence" value="ECO:0007669"/>
    <property type="project" value="UniProtKB-UniRule"/>
</dbReference>
<dbReference type="GO" id="GO:0009228">
    <property type="term" value="P:thiamine biosynthetic process"/>
    <property type="evidence" value="ECO:0000318"/>
    <property type="project" value="GO_Central"/>
</dbReference>
<dbReference type="GO" id="GO:0009229">
    <property type="term" value="P:thiamine diphosphate biosynthetic process"/>
    <property type="evidence" value="ECO:0007669"/>
    <property type="project" value="UniProtKB-UniRule"/>
</dbReference>
<dbReference type="FunFam" id="3.20.20.540:FF:000001">
    <property type="entry name" value="Phosphomethylpyrimidine synthase"/>
    <property type="match status" value="1"/>
</dbReference>
<dbReference type="Gene3D" id="6.10.250.620">
    <property type="match status" value="1"/>
</dbReference>
<dbReference type="Gene3D" id="3.20.20.540">
    <property type="entry name" value="Radical SAM ThiC family, central domain"/>
    <property type="match status" value="1"/>
</dbReference>
<dbReference type="HAMAP" id="MF_00089">
    <property type="entry name" value="ThiC"/>
    <property type="match status" value="1"/>
</dbReference>
<dbReference type="InterPro" id="IPR037509">
    <property type="entry name" value="ThiC"/>
</dbReference>
<dbReference type="InterPro" id="IPR025747">
    <property type="entry name" value="ThiC-associated_dom"/>
</dbReference>
<dbReference type="InterPro" id="IPR038521">
    <property type="entry name" value="ThiC/Bza_core_dom"/>
</dbReference>
<dbReference type="InterPro" id="IPR002817">
    <property type="entry name" value="ThiC/BzaA/B"/>
</dbReference>
<dbReference type="NCBIfam" id="NF006763">
    <property type="entry name" value="PRK09284.1"/>
    <property type="match status" value="1"/>
</dbReference>
<dbReference type="NCBIfam" id="NF009895">
    <property type="entry name" value="PRK13352.1"/>
    <property type="match status" value="1"/>
</dbReference>
<dbReference type="NCBIfam" id="TIGR00190">
    <property type="entry name" value="thiC"/>
    <property type="match status" value="1"/>
</dbReference>
<dbReference type="PANTHER" id="PTHR30557:SF1">
    <property type="entry name" value="PHOSPHOMETHYLPYRIMIDINE SYNTHASE, CHLOROPLASTIC"/>
    <property type="match status" value="1"/>
</dbReference>
<dbReference type="PANTHER" id="PTHR30557">
    <property type="entry name" value="THIAMINE BIOSYNTHESIS PROTEIN THIC"/>
    <property type="match status" value="1"/>
</dbReference>
<dbReference type="Pfam" id="PF13667">
    <property type="entry name" value="ThiC-associated"/>
    <property type="match status" value="1"/>
</dbReference>
<dbReference type="Pfam" id="PF01964">
    <property type="entry name" value="ThiC_Rad_SAM"/>
    <property type="match status" value="1"/>
</dbReference>
<dbReference type="SFLD" id="SFLDF00407">
    <property type="entry name" value="phosphomethylpyrimidine_syntha"/>
    <property type="match status" value="1"/>
</dbReference>
<dbReference type="SFLD" id="SFLDG01114">
    <property type="entry name" value="phosphomethylpyrimidine_syntha"/>
    <property type="match status" value="1"/>
</dbReference>
<dbReference type="SFLD" id="SFLDS00113">
    <property type="entry name" value="Radical_SAM_Phosphomethylpyrim"/>
    <property type="match status" value="1"/>
</dbReference>
<gene>
    <name evidence="1" type="primary">thiC</name>
    <name type="ordered locus">blr6659</name>
</gene>
<keyword id="KW-0004">4Fe-4S</keyword>
<keyword id="KW-0408">Iron</keyword>
<keyword id="KW-0411">Iron-sulfur</keyword>
<keyword id="KW-0456">Lyase</keyword>
<keyword id="KW-0479">Metal-binding</keyword>
<keyword id="KW-1185">Reference proteome</keyword>
<keyword id="KW-0949">S-adenosyl-L-methionine</keyword>
<keyword id="KW-0784">Thiamine biosynthesis</keyword>
<keyword id="KW-0862">Zinc</keyword>
<name>THIC_BRADU</name>
<accession>Q89FP0</accession>
<sequence length="632" mass="69760">MNIRSNPQQTVPAVTTGPLSSSRKIFASPDAAPDLRVPLREIILSEGAGEPNLPVYDTSGPYTDPSVTIDVNAGLARSRKQWVLERGGVEEYEGRQVKPEDNGNLSTDKAARAFSAYHKPLRGLDGHKITQLEFARAGIITKEMIYVAARENLGRKEQLERAEAALADGESFGAEVPAFITPEFVRSEIARGRAIIPCNINHSELEPMIIGRNFLTKINANIGNSAVTSSVEEEVEKMVWAIRWGADTVMDLSTGRNIHTTREWILRNAPVPIGTVPIYQALEKCNGDPVKLTWELYKDTLIEQCEQGVDYFTIHAGVRLSYIHLTANRVTGIVSRGGSIMAKWCLAHHKESFLYTHFDEICDLMRKYDVSFSLGDGLRPGSIADANDRAQFAELETLGELTKIAWDKGCQVMIEGPGHVPMHKIKINMDKQLRECGEAPFYTLGPLTTDIAPGYDHITSGIGAAMIGWFGCAMLCYVTPKEHLGLPDRNDVKVGVITYKIAAHASDLAKGHPAAQLRDDALSRARFDFRWSDQFNLGLDPDTAKNFHDETLPKEAHKVAHFCSMCGPKFCSMKITQDVRDYAATLNDPNSIGMSLSGTAEDGMKQMSAKFKEMGSSVYLDAEKVKESNRVL</sequence>
<reference key="1">
    <citation type="journal article" date="2002" name="DNA Res.">
        <title>Complete genomic sequence of nitrogen-fixing symbiotic bacterium Bradyrhizobium japonicum USDA110.</title>
        <authorList>
            <person name="Kaneko T."/>
            <person name="Nakamura Y."/>
            <person name="Sato S."/>
            <person name="Minamisawa K."/>
            <person name="Uchiumi T."/>
            <person name="Sasamoto S."/>
            <person name="Watanabe A."/>
            <person name="Idesawa K."/>
            <person name="Iriguchi M."/>
            <person name="Kawashima K."/>
            <person name="Kohara M."/>
            <person name="Matsumoto M."/>
            <person name="Shimpo S."/>
            <person name="Tsuruoka H."/>
            <person name="Wada T."/>
            <person name="Yamada M."/>
            <person name="Tabata S."/>
        </authorList>
    </citation>
    <scope>NUCLEOTIDE SEQUENCE [LARGE SCALE GENOMIC DNA]</scope>
    <source>
        <strain>JCM 10833 / BCRC 13528 / IAM 13628 / NBRC 14792 / USDA 110</strain>
    </source>
</reference>
<organism>
    <name type="scientific">Bradyrhizobium diazoefficiens (strain JCM 10833 / BCRC 13528 / IAM 13628 / NBRC 14792 / USDA 110)</name>
    <dbReference type="NCBI Taxonomy" id="224911"/>
    <lineage>
        <taxon>Bacteria</taxon>
        <taxon>Pseudomonadati</taxon>
        <taxon>Pseudomonadota</taxon>
        <taxon>Alphaproteobacteria</taxon>
        <taxon>Hyphomicrobiales</taxon>
        <taxon>Nitrobacteraceae</taxon>
        <taxon>Bradyrhizobium</taxon>
    </lineage>
</organism>
<protein>
    <recommendedName>
        <fullName evidence="1">Phosphomethylpyrimidine synthase</fullName>
        <ecNumber evidence="1">4.1.99.17</ecNumber>
    </recommendedName>
    <alternativeName>
        <fullName evidence="1">Hydroxymethylpyrimidine phosphate synthase</fullName>
        <shortName evidence="1">HMP-P synthase</shortName>
        <shortName evidence="1">HMP-phosphate synthase</shortName>
        <shortName evidence="1">HMPP synthase</shortName>
    </alternativeName>
    <alternativeName>
        <fullName evidence="1">Thiamine biosynthesis protein ThiC</fullName>
    </alternativeName>
</protein>